<comment type="function">
    <text evidence="1 9 10 11">Serine/threonine-protein kinase (By similarity). Phosphorylates the microtubule-associated protein MAPT/TAU (By similarity). Also phosphorylates the microtubule-associated proteins MAP2 and MAP4 (By similarity). Involved in regulation of the microtubule network, causing reorganization of microtubules into bundles (By similarity). Required for the initiation of axoneme extension during cilium assembly (By similarity). Regulates the centrosomal location of ODF2 and phosphorylates ODF2 in vitro (By similarity). Plays a role in cell cycle progression, specifically in the G1/S checkpoint (By similarity). Reduces neuronal cell survival (By similarity). Plays a role in energy homeostasis by regulating satiety and metabolic rate (PubMed:22992738). Promotes adipogenesis by activating JNK1 and inhibiting the p38MAPK pathway, and triggers apoptosis by activating the JNK1 pathway (PubMed:24989893). Phosphorylates mTORC1 complex member RPTOR and acts as a negative regulator of the mTORC1 complex, probably due to disruption of the interaction between phosphorylated RPTOR and the RRAGA/RRAGC heterodimer which is required for mTORC1 activation (By similarity). Involved in NLRP3 positioning along microtubules by mediating NLRP3 recruitment to microtubule organizing center (MTOC) upon inflammasome activation (PubMed:28656979).</text>
</comment>
<comment type="catalytic activity">
    <reaction evidence="1">
        <text>L-seryl-[protein] + ATP = O-phospho-L-seryl-[protein] + ADP + H(+)</text>
        <dbReference type="Rhea" id="RHEA:17989"/>
        <dbReference type="Rhea" id="RHEA-COMP:9863"/>
        <dbReference type="Rhea" id="RHEA-COMP:11604"/>
        <dbReference type="ChEBI" id="CHEBI:15378"/>
        <dbReference type="ChEBI" id="CHEBI:29999"/>
        <dbReference type="ChEBI" id="CHEBI:30616"/>
        <dbReference type="ChEBI" id="CHEBI:83421"/>
        <dbReference type="ChEBI" id="CHEBI:456216"/>
        <dbReference type="EC" id="2.7.11.1"/>
    </reaction>
</comment>
<comment type="catalytic activity">
    <reaction evidence="1">
        <text>L-threonyl-[protein] + ATP = O-phospho-L-threonyl-[protein] + ADP + H(+)</text>
        <dbReference type="Rhea" id="RHEA:46608"/>
        <dbReference type="Rhea" id="RHEA-COMP:11060"/>
        <dbReference type="Rhea" id="RHEA-COMP:11605"/>
        <dbReference type="ChEBI" id="CHEBI:15378"/>
        <dbReference type="ChEBI" id="CHEBI:30013"/>
        <dbReference type="ChEBI" id="CHEBI:30616"/>
        <dbReference type="ChEBI" id="CHEBI:61977"/>
        <dbReference type="ChEBI" id="CHEBI:456216"/>
        <dbReference type="EC" id="2.7.11.1"/>
    </reaction>
</comment>
<comment type="cofactor">
    <cofactor evidence="1">
        <name>Mg(2+)</name>
        <dbReference type="ChEBI" id="CHEBI:18420"/>
    </cofactor>
</comment>
<comment type="activity regulation">
    <text evidence="1">Activated by phosphorylation on Thr-214.</text>
</comment>
<comment type="subunit">
    <text evidence="1 11">Interacts with MAPT/TAU (By similarity). Interacts with gamma-tubulin (By similarity). Interacts with ODF2 (By similarity). Interacts with USP9X (By similarity). Interacts with YWHAQ (By similarity). Interacts with NLRP3; promoting NLRP3 recruitment to microtubule organizing center (MTOC) (PubMed:28656979).</text>
</comment>
<comment type="subcellular location">
    <subcellularLocation>
        <location evidence="1">Cytoplasm</location>
        <location evidence="1">Cytoskeleton</location>
        <location evidence="1">Microtubule organizing center</location>
        <location evidence="1">Centrosome</location>
    </subcellularLocation>
    <subcellularLocation>
        <location evidence="11">Cytoplasm</location>
        <location evidence="11">Cytoskeleton</location>
        <location evidence="11">Microtubule organizing center</location>
    </subcellularLocation>
    <subcellularLocation>
        <location evidence="1">Cytoplasm</location>
        <location evidence="1">Cytoskeleton</location>
        <location evidence="1">Cilium axoneme</location>
    </subcellularLocation>
    <subcellularLocation>
        <location evidence="1">Cytoplasm</location>
        <location evidence="1">Cytoskeleton</location>
        <location evidence="1">Cilium basal body</location>
    </subcellularLocation>
    <subcellularLocation>
        <location evidence="1">Cytoplasm</location>
    </subcellularLocation>
    <subcellularLocation>
        <location evidence="1">Cell projection</location>
        <location evidence="1">Dendrite</location>
    </subcellularLocation>
    <text evidence="1">Localized at the tips of neurite-like processes in differentiated neuroblast cells. Detected in the cytoplasm and neuropil of the hippocampus.</text>
</comment>
<comment type="alternative products">
    <event type="alternative splicing"/>
    <isoform>
        <id>Q8CIP4-1</id>
        <name>1</name>
        <name>MARK4L</name>
        <sequence type="displayed"/>
    </isoform>
    <isoform>
        <id>Q8CIP4-2</id>
        <name>2</name>
        <name>MARK4S</name>
        <sequence type="described" ref="VSP_058199"/>
    </isoform>
</comment>
<comment type="tissue specificity">
    <text evidence="7 8">Isoform 1 and isoform 2 show similar expression patterns in the central nervous system and are present in the same subsets of neurons including pyramidal and non-pyramidal neurons in the cerebral cortex and hippocampus, cerebellar Purkinje cells, and interneurons and motor neurons in the spinal cord but not in glial cells (at protein level) (PubMed:16973293). Isoform 2 is the major isoform in brain and cerebellum (PubMed:15009667, PubMed:16973293). Also expressed in spleen, liver, small intestine, colon, kidney, tongue, testis and lung (PubMed:15009667, PubMed:16973293). Isoform 1 and isoform 2 are expressed at similar levels in heart (PubMed:16973293).</text>
</comment>
<comment type="PTM">
    <text evidence="1">Ubiquitinated with 'Lys-29'- and 'Lys-33'-linked polyubiquitins which appear to impede LKB1-mediated phosphorylation. Deubiquitinated by USP9X (By similarity).</text>
</comment>
<comment type="PTM">
    <text evidence="1">Phosphorylated at Thr-214 by STK11/LKB1 in complex with STE20-related adapter-alpha (STRADA) pseudo kinase and CAB39. Phosphorylated throughout the cell cycle.</text>
</comment>
<comment type="disruption phenotype">
    <text evidence="9">Hyperphagia, hyperactivity and hypermetabolism leading to protection from diet-induced obesity, and improved glucose homeostasis due to up-regulation of AMPK kinase activity.</text>
</comment>
<comment type="similarity">
    <text evidence="15">Belongs to the protein kinase superfamily. CAMK Ser/Thr protein kinase family. SNF1 subfamily.</text>
</comment>
<dbReference type="EC" id="2.7.11.1" evidence="1"/>
<dbReference type="EMBL" id="AY151083">
    <property type="protein sequence ID" value="AAN60072.1"/>
    <property type="molecule type" value="mRNA"/>
</dbReference>
<dbReference type="EMBL" id="AX305103">
    <property type="status" value="NOT_ANNOTATED_CDS"/>
    <property type="molecule type" value="mRNA"/>
</dbReference>
<dbReference type="EMBL" id="AX305104">
    <property type="status" value="NOT_ANNOTATED_CDS"/>
    <property type="molecule type" value="mRNA"/>
</dbReference>
<dbReference type="EMBL" id="AK122565">
    <property type="protein sequence ID" value="BAC65847.2"/>
    <property type="molecule type" value="mRNA"/>
</dbReference>
<dbReference type="CCDS" id="CCDS20903.1">
    <molecule id="Q8CIP4-1"/>
</dbReference>
<dbReference type="RefSeq" id="NP_001355356.1">
    <molecule id="Q8CIP4-2"/>
    <property type="nucleotide sequence ID" value="NM_001368427.1"/>
</dbReference>
<dbReference type="RefSeq" id="NP_758483.1">
    <molecule id="Q8CIP4-1"/>
    <property type="nucleotide sequence ID" value="NM_172279.2"/>
</dbReference>
<dbReference type="RefSeq" id="XP_006539892.1">
    <property type="nucleotide sequence ID" value="XM_006539829.3"/>
</dbReference>
<dbReference type="SMR" id="Q8CIP4"/>
<dbReference type="BioGRID" id="231328">
    <property type="interactions" value="23"/>
</dbReference>
<dbReference type="DIP" id="DIP-60721N"/>
<dbReference type="FunCoup" id="Q8CIP4">
    <property type="interactions" value="1534"/>
</dbReference>
<dbReference type="IntAct" id="Q8CIP4">
    <property type="interactions" value="4"/>
</dbReference>
<dbReference type="STRING" id="10090.ENSMUSP00000082862"/>
<dbReference type="BindingDB" id="Q8CIP4"/>
<dbReference type="ChEMBL" id="CHEMBL4523387"/>
<dbReference type="GlyGen" id="Q8CIP4">
    <property type="glycosylation" value="2 sites, 1 N-linked glycan (1 site), 1 O-linked glycan (1 site)"/>
</dbReference>
<dbReference type="iPTMnet" id="Q8CIP4"/>
<dbReference type="PhosphoSitePlus" id="Q8CIP4"/>
<dbReference type="jPOST" id="Q8CIP4"/>
<dbReference type="PaxDb" id="10090-ENSMUSP00000082862"/>
<dbReference type="PeptideAtlas" id="Q8CIP4"/>
<dbReference type="ProteomicsDB" id="295796">
    <molecule id="Q8CIP4-1"/>
</dbReference>
<dbReference type="ProteomicsDB" id="295797">
    <molecule id="Q8CIP4-2"/>
</dbReference>
<dbReference type="Antibodypedia" id="31285">
    <property type="antibodies" value="373 antibodies from 36 providers"/>
</dbReference>
<dbReference type="DNASU" id="232944"/>
<dbReference type="Ensembl" id="ENSMUST00000085715.7">
    <molecule id="Q8CIP4-1"/>
    <property type="protein sequence ID" value="ENSMUSP00000082862.6"/>
    <property type="gene ID" value="ENSMUSG00000030397.12"/>
</dbReference>
<dbReference type="Ensembl" id="ENSMUST00000239292.2">
    <molecule id="Q8CIP4-2"/>
    <property type="protein sequence ID" value="ENSMUSP00000159279.2"/>
    <property type="gene ID" value="ENSMUSG00000030397.12"/>
</dbReference>
<dbReference type="GeneID" id="232944"/>
<dbReference type="KEGG" id="mmu:232944"/>
<dbReference type="UCSC" id="uc009flx.1">
    <molecule id="Q8CIP4-1"/>
    <property type="organism name" value="mouse"/>
</dbReference>
<dbReference type="AGR" id="MGI:1920955"/>
<dbReference type="CTD" id="57787"/>
<dbReference type="MGI" id="MGI:1920955">
    <property type="gene designation" value="Mark4"/>
</dbReference>
<dbReference type="VEuPathDB" id="HostDB:ENSMUSG00000030397"/>
<dbReference type="eggNOG" id="KOG0586">
    <property type="taxonomic scope" value="Eukaryota"/>
</dbReference>
<dbReference type="GeneTree" id="ENSGT00940000159555"/>
<dbReference type="HOGENOM" id="CLU_000288_157_5_1"/>
<dbReference type="InParanoid" id="Q8CIP4"/>
<dbReference type="OMA" id="CHLPWDK"/>
<dbReference type="OrthoDB" id="193931at2759"/>
<dbReference type="PhylomeDB" id="Q8CIP4"/>
<dbReference type="TreeFam" id="TF315213"/>
<dbReference type="Reactome" id="R-MMU-5620912">
    <property type="pathway name" value="Anchoring of the basal body to the plasma membrane"/>
</dbReference>
<dbReference type="BioGRID-ORCS" id="232944">
    <property type="hits" value="2 hits in 82 CRISPR screens"/>
</dbReference>
<dbReference type="CD-CODE" id="CE726F99">
    <property type="entry name" value="Postsynaptic density"/>
</dbReference>
<dbReference type="ChiTaRS" id="Mark4">
    <property type="organism name" value="mouse"/>
</dbReference>
<dbReference type="PRO" id="PR:Q8CIP4"/>
<dbReference type="Proteomes" id="UP000000589">
    <property type="component" value="Chromosome 7"/>
</dbReference>
<dbReference type="RNAct" id="Q8CIP4">
    <property type="molecule type" value="protein"/>
</dbReference>
<dbReference type="Bgee" id="ENSMUSG00000030397">
    <property type="expression patterns" value="Expressed in internal carotid artery and 245 other cell types or tissues"/>
</dbReference>
<dbReference type="ExpressionAtlas" id="Q8CIP4">
    <property type="expression patterns" value="baseline and differential"/>
</dbReference>
<dbReference type="GO" id="GO:0005813">
    <property type="term" value="C:centrosome"/>
    <property type="evidence" value="ECO:0000250"/>
    <property type="project" value="UniProtKB"/>
</dbReference>
<dbReference type="GO" id="GO:0036064">
    <property type="term" value="C:ciliary basal body"/>
    <property type="evidence" value="ECO:0007669"/>
    <property type="project" value="Ensembl"/>
</dbReference>
<dbReference type="GO" id="GO:0005737">
    <property type="term" value="C:cytoplasm"/>
    <property type="evidence" value="ECO:0000250"/>
    <property type="project" value="UniProtKB"/>
</dbReference>
<dbReference type="GO" id="GO:0005829">
    <property type="term" value="C:cytosol"/>
    <property type="evidence" value="ECO:0007669"/>
    <property type="project" value="Ensembl"/>
</dbReference>
<dbReference type="GO" id="GO:0030425">
    <property type="term" value="C:dendrite"/>
    <property type="evidence" value="ECO:0000250"/>
    <property type="project" value="UniProtKB"/>
</dbReference>
<dbReference type="GO" id="GO:0000930">
    <property type="term" value="C:gamma-tubulin complex"/>
    <property type="evidence" value="ECO:0007669"/>
    <property type="project" value="Ensembl"/>
</dbReference>
<dbReference type="GO" id="GO:0015630">
    <property type="term" value="C:microtubule cytoskeleton"/>
    <property type="evidence" value="ECO:0000250"/>
    <property type="project" value="UniProtKB"/>
</dbReference>
<dbReference type="GO" id="GO:0005815">
    <property type="term" value="C:microtubule organizing center"/>
    <property type="evidence" value="ECO:0000314"/>
    <property type="project" value="UniProtKB"/>
</dbReference>
<dbReference type="GO" id="GO:0030496">
    <property type="term" value="C:midbody"/>
    <property type="evidence" value="ECO:0007669"/>
    <property type="project" value="Ensembl"/>
</dbReference>
<dbReference type="GO" id="GO:0043005">
    <property type="term" value="C:neuron projection"/>
    <property type="evidence" value="ECO:0000250"/>
    <property type="project" value="UniProtKB"/>
</dbReference>
<dbReference type="GO" id="GO:0005524">
    <property type="term" value="F:ATP binding"/>
    <property type="evidence" value="ECO:0007669"/>
    <property type="project" value="UniProtKB-KW"/>
</dbReference>
<dbReference type="GO" id="GO:0008093">
    <property type="term" value="F:cytoskeletal anchor activity"/>
    <property type="evidence" value="ECO:0000314"/>
    <property type="project" value="UniProtKB"/>
</dbReference>
<dbReference type="GO" id="GO:0043015">
    <property type="term" value="F:gamma-tubulin binding"/>
    <property type="evidence" value="ECO:0000250"/>
    <property type="project" value="UniProtKB"/>
</dbReference>
<dbReference type="GO" id="GO:0008017">
    <property type="term" value="F:microtubule binding"/>
    <property type="evidence" value="ECO:0000250"/>
    <property type="project" value="UniProtKB"/>
</dbReference>
<dbReference type="GO" id="GO:0106310">
    <property type="term" value="F:protein serine kinase activity"/>
    <property type="evidence" value="ECO:0007669"/>
    <property type="project" value="RHEA"/>
</dbReference>
<dbReference type="GO" id="GO:0004674">
    <property type="term" value="F:protein serine/threonine kinase activity"/>
    <property type="evidence" value="ECO:0000250"/>
    <property type="project" value="UniProtKB"/>
</dbReference>
<dbReference type="GO" id="GO:0050321">
    <property type="term" value="F:tau-protein kinase activity"/>
    <property type="evidence" value="ECO:0000250"/>
    <property type="project" value="UniProtKB"/>
</dbReference>
<dbReference type="GO" id="GO:0051301">
    <property type="term" value="P:cell division"/>
    <property type="evidence" value="ECO:0007669"/>
    <property type="project" value="UniProtKB-KW"/>
</dbReference>
<dbReference type="GO" id="GO:0044782">
    <property type="term" value="P:cilium organization"/>
    <property type="evidence" value="ECO:0007669"/>
    <property type="project" value="Ensembl"/>
</dbReference>
<dbReference type="GO" id="GO:0001578">
    <property type="term" value="P:microtubule bundle formation"/>
    <property type="evidence" value="ECO:0000250"/>
    <property type="project" value="UniProtKB"/>
</dbReference>
<dbReference type="GO" id="GO:0000226">
    <property type="term" value="P:microtubule cytoskeleton organization"/>
    <property type="evidence" value="ECO:0000250"/>
    <property type="project" value="UniProtKB"/>
</dbReference>
<dbReference type="GO" id="GO:0007399">
    <property type="term" value="P:nervous system development"/>
    <property type="evidence" value="ECO:0000250"/>
    <property type="project" value="UniProtKB"/>
</dbReference>
<dbReference type="GO" id="GO:0045787">
    <property type="term" value="P:positive regulation of cell cycle"/>
    <property type="evidence" value="ECO:0007669"/>
    <property type="project" value="Ensembl"/>
</dbReference>
<dbReference type="GO" id="GO:0045724">
    <property type="term" value="P:positive regulation of cilium assembly"/>
    <property type="evidence" value="ECO:0007669"/>
    <property type="project" value="Ensembl"/>
</dbReference>
<dbReference type="GO" id="GO:1900227">
    <property type="term" value="P:positive regulation of NLRP3 inflammasome complex assembly"/>
    <property type="evidence" value="ECO:0000314"/>
    <property type="project" value="UniProtKB"/>
</dbReference>
<dbReference type="GO" id="GO:1904781">
    <property type="term" value="P:positive regulation of protein localization to centrosome"/>
    <property type="evidence" value="ECO:0007669"/>
    <property type="project" value="Ensembl"/>
</dbReference>
<dbReference type="GO" id="GO:0006468">
    <property type="term" value="P:protein phosphorylation"/>
    <property type="evidence" value="ECO:0000250"/>
    <property type="project" value="UniProtKB"/>
</dbReference>
<dbReference type="GO" id="GO:0046605">
    <property type="term" value="P:regulation of centrosome cycle"/>
    <property type="evidence" value="ECO:0007669"/>
    <property type="project" value="Ensembl"/>
</dbReference>
<dbReference type="CDD" id="cd12197">
    <property type="entry name" value="MARK4_C"/>
    <property type="match status" value="1"/>
</dbReference>
<dbReference type="CDD" id="cd14072">
    <property type="entry name" value="STKc_MARK"/>
    <property type="match status" value="1"/>
</dbReference>
<dbReference type="CDD" id="cd14407">
    <property type="entry name" value="UBA_MARK3_4"/>
    <property type="match status" value="1"/>
</dbReference>
<dbReference type="FunFam" id="1.10.510.10:FF:001032">
    <property type="entry name" value="KP78b, isoform A"/>
    <property type="match status" value="1"/>
</dbReference>
<dbReference type="FunFam" id="1.10.8.10:FF:000011">
    <property type="entry name" value="Non-specific serine/threonine protein kinase"/>
    <property type="match status" value="1"/>
</dbReference>
<dbReference type="FunFam" id="3.30.200.20:FF:000003">
    <property type="entry name" value="Non-specific serine/threonine protein kinase"/>
    <property type="match status" value="1"/>
</dbReference>
<dbReference type="FunFam" id="3.30.310.80:FF:000009">
    <property type="entry name" value="Non-specific serine/threonine protein kinase"/>
    <property type="match status" value="1"/>
</dbReference>
<dbReference type="Gene3D" id="1.10.8.10">
    <property type="entry name" value="DNA helicase RuvA subunit, C-terminal domain"/>
    <property type="match status" value="1"/>
</dbReference>
<dbReference type="Gene3D" id="3.30.310.80">
    <property type="entry name" value="Kinase associated domain 1, KA1"/>
    <property type="match status" value="1"/>
</dbReference>
<dbReference type="Gene3D" id="3.30.200.20">
    <property type="entry name" value="Phosphorylase Kinase, domain 1"/>
    <property type="match status" value="1"/>
</dbReference>
<dbReference type="Gene3D" id="1.10.510.10">
    <property type="entry name" value="Transferase(Phosphotransferase) domain 1"/>
    <property type="match status" value="1"/>
</dbReference>
<dbReference type="InterPro" id="IPR028375">
    <property type="entry name" value="KA1/Ssp2_C"/>
</dbReference>
<dbReference type="InterPro" id="IPR001772">
    <property type="entry name" value="KA1_dom"/>
</dbReference>
<dbReference type="InterPro" id="IPR011009">
    <property type="entry name" value="Kinase-like_dom_sf"/>
</dbReference>
<dbReference type="InterPro" id="IPR049508">
    <property type="entry name" value="MARK1-4_cat"/>
</dbReference>
<dbReference type="InterPro" id="IPR000719">
    <property type="entry name" value="Prot_kinase_dom"/>
</dbReference>
<dbReference type="InterPro" id="IPR017441">
    <property type="entry name" value="Protein_kinase_ATP_BS"/>
</dbReference>
<dbReference type="InterPro" id="IPR008271">
    <property type="entry name" value="Ser/Thr_kinase_AS"/>
</dbReference>
<dbReference type="InterPro" id="IPR015940">
    <property type="entry name" value="UBA"/>
</dbReference>
<dbReference type="PANTHER" id="PTHR24346">
    <property type="entry name" value="MAP/MICROTUBULE AFFINITY-REGULATING KINASE"/>
    <property type="match status" value="1"/>
</dbReference>
<dbReference type="PANTHER" id="PTHR24346:SF28">
    <property type="entry name" value="MAP_MICROTUBULE AFFINITY-REGULATING KINASE 4"/>
    <property type="match status" value="1"/>
</dbReference>
<dbReference type="Pfam" id="PF02149">
    <property type="entry name" value="KA1"/>
    <property type="match status" value="1"/>
</dbReference>
<dbReference type="Pfam" id="PF00069">
    <property type="entry name" value="Pkinase"/>
    <property type="match status" value="1"/>
</dbReference>
<dbReference type="Pfam" id="PF00627">
    <property type="entry name" value="UBA"/>
    <property type="match status" value="1"/>
</dbReference>
<dbReference type="SMART" id="SM00220">
    <property type="entry name" value="S_TKc"/>
    <property type="match status" value="1"/>
</dbReference>
<dbReference type="SMART" id="SM00165">
    <property type="entry name" value="UBA"/>
    <property type="match status" value="1"/>
</dbReference>
<dbReference type="SUPFAM" id="SSF103243">
    <property type="entry name" value="KA1-like"/>
    <property type="match status" value="1"/>
</dbReference>
<dbReference type="SUPFAM" id="SSF56112">
    <property type="entry name" value="Protein kinase-like (PK-like)"/>
    <property type="match status" value="1"/>
</dbReference>
<dbReference type="PROSITE" id="PS50032">
    <property type="entry name" value="KA1"/>
    <property type="match status" value="1"/>
</dbReference>
<dbReference type="PROSITE" id="PS00107">
    <property type="entry name" value="PROTEIN_KINASE_ATP"/>
    <property type="match status" value="1"/>
</dbReference>
<dbReference type="PROSITE" id="PS50011">
    <property type="entry name" value="PROTEIN_KINASE_DOM"/>
    <property type="match status" value="1"/>
</dbReference>
<dbReference type="PROSITE" id="PS00108">
    <property type="entry name" value="PROTEIN_KINASE_ST"/>
    <property type="match status" value="1"/>
</dbReference>
<dbReference type="PROSITE" id="PS50030">
    <property type="entry name" value="UBA"/>
    <property type="match status" value="1"/>
</dbReference>
<protein>
    <recommendedName>
        <fullName evidence="15">MAP/microtubule affinity-regulating kinase 4</fullName>
        <ecNumber evidence="1">2.7.11.1</ecNumber>
    </recommendedName>
</protein>
<feature type="chain" id="PRO_0000086308" description="MAP/microtubule affinity-regulating kinase 4">
    <location>
        <begin position="1"/>
        <end position="752"/>
    </location>
</feature>
<feature type="domain" description="Protein kinase" evidence="2">
    <location>
        <begin position="59"/>
        <end position="310"/>
    </location>
</feature>
<feature type="domain" description="UBA" evidence="3">
    <location>
        <begin position="324"/>
        <end position="368"/>
    </location>
</feature>
<feature type="domain" description="KA1" evidence="4">
    <location>
        <begin position="703"/>
        <end position="752"/>
    </location>
</feature>
<feature type="region of interest" description="Disordered" evidence="6">
    <location>
        <begin position="1"/>
        <end position="36"/>
    </location>
</feature>
<feature type="region of interest" description="Disordered" evidence="6">
    <location>
        <begin position="385"/>
        <end position="615"/>
    </location>
</feature>
<feature type="compositionally biased region" description="Low complexity" evidence="6">
    <location>
        <begin position="391"/>
        <end position="406"/>
    </location>
</feature>
<feature type="compositionally biased region" description="Low complexity" evidence="6">
    <location>
        <begin position="544"/>
        <end position="553"/>
    </location>
</feature>
<feature type="active site" description="Proton acceptor" evidence="2 5">
    <location>
        <position position="181"/>
    </location>
</feature>
<feature type="binding site" evidence="2">
    <location>
        <begin position="65"/>
        <end position="73"/>
    </location>
    <ligand>
        <name>ATP</name>
        <dbReference type="ChEBI" id="CHEBI:30616"/>
    </ligand>
</feature>
<feature type="binding site" evidence="2">
    <location>
        <position position="88"/>
    </location>
    <ligand>
        <name>ATP</name>
        <dbReference type="ChEBI" id="CHEBI:30616"/>
    </ligand>
</feature>
<feature type="modified residue" description="Phosphothreonine; by LKB1" evidence="1">
    <location>
        <position position="214"/>
    </location>
</feature>
<feature type="modified residue" description="Phosphoserine" evidence="17">
    <location>
        <position position="423"/>
    </location>
</feature>
<feature type="modified residue" description="Phosphoserine" evidence="1">
    <location>
        <position position="543"/>
    </location>
</feature>
<feature type="splice variant" id="VSP_058199" description="In isoform 2." evidence="13">
    <original>TDEPERIGGPEVTSCHLPWDKTETAPRLLRFPWSVKLTSSRPPEALMAALRQATAAARCRCRQPQPFLLACLHGGAGGPEPLSHFEVEVCQLPRPGLRGVLFRRVAGTALAFRTLVTRISNDLEL</original>
    <variation>TLDPSKRQNSNRCVSGASLPQGSKIRSQTNLRESGDLRSQVAIYLGIKRKPPPGCSDSPGV</variation>
    <location>
        <begin position="628"/>
        <end position="752"/>
    </location>
</feature>
<feature type="sequence conflict" description="In Ref. 2; AX305103/AX305104." evidence="15" ref="2">
    <original>F</original>
    <variation>L</variation>
    <location>
        <position position="162"/>
    </location>
</feature>
<feature type="sequence conflict" description="In Ref. 2; AX305103/AX305104." evidence="15" ref="2">
    <original>V</original>
    <variation>I</variation>
    <location>
        <position position="268"/>
    </location>
</feature>
<feature type="sequence conflict" description="In Ref. 2; AX305103/AX305104." evidence="15" ref="2">
    <original>E</original>
    <variation>D</variation>
    <location>
        <position position="372"/>
    </location>
</feature>
<feature type="sequence conflict" description="In Ref. 2; AX305103." evidence="15" ref="2">
    <original>S</original>
    <variation>T</variation>
    <location>
        <position position="438"/>
    </location>
</feature>
<feature type="sequence conflict" description="In Ref. 2; AX305103." evidence="15" ref="2">
    <original>L</original>
    <variation>M</variation>
    <location>
        <position position="677"/>
    </location>
</feature>
<accession>Q8CIP4</accession>
<accession>Q80T81</accession>
<proteinExistence type="evidence at protein level"/>
<keyword id="KW-0025">Alternative splicing</keyword>
<keyword id="KW-0067">ATP-binding</keyword>
<keyword id="KW-0131">Cell cycle</keyword>
<keyword id="KW-0132">Cell division</keyword>
<keyword id="KW-0966">Cell projection</keyword>
<keyword id="KW-0970">Cilium biogenesis/degradation</keyword>
<keyword id="KW-0963">Cytoplasm</keyword>
<keyword id="KW-0206">Cytoskeleton</keyword>
<keyword id="KW-0903">Direct protein sequencing</keyword>
<keyword id="KW-0418">Kinase</keyword>
<keyword id="KW-0498">Mitosis</keyword>
<keyword id="KW-0547">Nucleotide-binding</keyword>
<keyword id="KW-0597">Phosphoprotein</keyword>
<keyword id="KW-1185">Reference proteome</keyword>
<keyword id="KW-0723">Serine/threonine-protein kinase</keyword>
<keyword id="KW-0808">Transferase</keyword>
<keyword id="KW-0832">Ubl conjugation</keyword>
<evidence type="ECO:0000250" key="1">
    <source>
        <dbReference type="UniProtKB" id="Q96L34"/>
    </source>
</evidence>
<evidence type="ECO:0000255" key="2">
    <source>
        <dbReference type="PROSITE-ProRule" id="PRU00159"/>
    </source>
</evidence>
<evidence type="ECO:0000255" key="3">
    <source>
        <dbReference type="PROSITE-ProRule" id="PRU00212"/>
    </source>
</evidence>
<evidence type="ECO:0000255" key="4">
    <source>
        <dbReference type="PROSITE-ProRule" id="PRU00565"/>
    </source>
</evidence>
<evidence type="ECO:0000255" key="5">
    <source>
        <dbReference type="PROSITE-ProRule" id="PRU10027"/>
    </source>
</evidence>
<evidence type="ECO:0000256" key="6">
    <source>
        <dbReference type="SAM" id="MobiDB-lite"/>
    </source>
</evidence>
<evidence type="ECO:0000269" key="7">
    <source>
    </source>
</evidence>
<evidence type="ECO:0000269" key="8">
    <source>
    </source>
</evidence>
<evidence type="ECO:0000269" key="9">
    <source>
    </source>
</evidence>
<evidence type="ECO:0000269" key="10">
    <source>
    </source>
</evidence>
<evidence type="ECO:0000269" key="11">
    <source>
    </source>
</evidence>
<evidence type="ECO:0000303" key="12">
    <source>
    </source>
</evidence>
<evidence type="ECO:0000303" key="13">
    <source>
    </source>
</evidence>
<evidence type="ECO:0000303" key="14">
    <source>
    </source>
</evidence>
<evidence type="ECO:0000305" key="15"/>
<evidence type="ECO:0000312" key="16">
    <source>
        <dbReference type="MGI" id="MGI:1920955"/>
    </source>
</evidence>
<evidence type="ECO:0007744" key="17">
    <source>
    </source>
</evidence>
<reference key="1">
    <citation type="journal article" date="2006" name="Neuroscience">
        <title>Distinct expression pattern of microtubule-associated protein/microtubule affinity-regulating kinase 4 in differentiated neurons.</title>
        <authorList>
            <person name="Moroni R.F."/>
            <person name="De Biasi S."/>
            <person name="Colapietro P."/>
            <person name="Larizza L."/>
            <person name="Beghini A."/>
        </authorList>
    </citation>
    <scope>NUCLEOTIDE SEQUENCE [MRNA] (ISOFORM 1)</scope>
    <scope>TISSUE SPECIFICITY</scope>
</reference>
<reference key="2">
    <citation type="journal article" date="2004" name="J. Neurochem.">
        <title>Identification of regulated genes during permanent focal cerebral ischaemia: characterization of the protein kinase 9b5/MARKL1/MARK4.</title>
        <authorList>
            <person name="Schneider A."/>
            <person name="Laage R."/>
            <person name="von Ahsen O."/>
            <person name="Fischer A."/>
            <person name="Rossner M."/>
            <person name="Scheek S."/>
            <person name="Grunewald S."/>
            <person name="Kuner R."/>
            <person name="Weber D."/>
            <person name="Kruger C."/>
            <person name="Klaussner B."/>
            <person name="Gotz B."/>
            <person name="Hiemisch H."/>
            <person name="Newrzella D."/>
            <person name="Martin-Villalba A."/>
            <person name="Bach A."/>
            <person name="Schwaninger M."/>
        </authorList>
    </citation>
    <scope>NUCLEOTIDE SEQUENCE [MRNA] OF 29-752 (ISOFORMS 1 AND 2)</scope>
    <scope>TISSUE SPECIFICITY</scope>
</reference>
<reference key="3">
    <citation type="journal article" date="2003" name="DNA Res.">
        <title>Prediction of the coding sequences of mouse homologues of KIAA gene: II. The complete nucleotide sequences of 400 mouse KIAA-homologous cDNAs identified by screening of terminal sequences of cDNA clones randomly sampled from size-fractionated libraries.</title>
        <authorList>
            <person name="Okazaki N."/>
            <person name="Kikuno R."/>
            <person name="Ohara R."/>
            <person name="Inamoto S."/>
            <person name="Aizawa H."/>
            <person name="Yuasa S."/>
            <person name="Nakajima D."/>
            <person name="Nagase T."/>
            <person name="Ohara O."/>
            <person name="Koga H."/>
        </authorList>
    </citation>
    <scope>NUCLEOTIDE SEQUENCE [LARGE SCALE MRNA] OF 119-752 (ISOFORM 1)</scope>
    <source>
        <tissue>Pancreatic islet</tissue>
    </source>
</reference>
<reference key="4">
    <citation type="submission" date="2004-06" db="EMBL/GenBank/DDBJ databases">
        <authorList>
            <person name="Okazaki N."/>
            <person name="Kikuno R."/>
            <person name="Nagase T."/>
            <person name="Ohara O."/>
            <person name="Koga H."/>
        </authorList>
    </citation>
    <scope>SEQUENCE REVISION</scope>
</reference>
<reference key="5">
    <citation type="submission" date="2009-01" db="UniProtKB">
        <authorList>
            <person name="Lubec G."/>
            <person name="Sunyer B."/>
            <person name="Chen W.-Q."/>
        </authorList>
    </citation>
    <scope>PROTEIN SEQUENCE OF 299-308</scope>
    <scope>IDENTIFICATION BY MASS SPECTROMETRY</scope>
    <source>
        <strain>OF1</strain>
        <tissue>Hippocampus</tissue>
    </source>
</reference>
<reference key="6">
    <citation type="journal article" date="2010" name="Cell">
        <title>A tissue-specific atlas of mouse protein phosphorylation and expression.</title>
        <authorList>
            <person name="Huttlin E.L."/>
            <person name="Jedrychowski M.P."/>
            <person name="Elias J.E."/>
            <person name="Goswami T."/>
            <person name="Rad R."/>
            <person name="Beausoleil S.A."/>
            <person name="Villen J."/>
            <person name="Haas W."/>
            <person name="Sowa M.E."/>
            <person name="Gygi S.P."/>
        </authorList>
    </citation>
    <scope>PHOSPHORYLATION [LARGE SCALE ANALYSIS] AT SER-423</scope>
    <scope>IDENTIFICATION BY MASS SPECTROMETRY [LARGE SCALE ANALYSIS]</scope>
    <source>
        <tissue>Brain</tissue>
    </source>
</reference>
<reference key="7">
    <citation type="journal article" date="2012" name="J. Biol. Chem.">
        <title>Inactivation of MARK4, an AMP-activated protein kinase (AMPK)-related kinase, leads to insulin hypersensitivity and resistance to diet-induced obesity.</title>
        <authorList>
            <person name="Sun C."/>
            <person name="Tian L."/>
            <person name="Nie J."/>
            <person name="Zhang H."/>
            <person name="Han X."/>
            <person name="Shi Y."/>
        </authorList>
    </citation>
    <scope>FUNCTION</scope>
    <scope>DISRUPTION PHENOTYPE</scope>
</reference>
<reference key="8">
    <citation type="journal article" date="2014" name="Biol. Cell">
        <title>Mark4 promotes adipogenesis and triggers apoptosis in 3T3-L1 adipocytes by activating JNK1 and inhibiting p38MAPK pathways.</title>
        <authorList>
            <person name="Feng M."/>
            <person name="Tian L."/>
            <person name="Gan L."/>
            <person name="Liu Z."/>
            <person name="Sun C."/>
        </authorList>
    </citation>
    <scope>FUNCTION</scope>
</reference>
<reference key="9">
    <citation type="journal article" date="2017" name="Nat. Commun.">
        <title>MARK4 regulates NLRP3 positioning and inflammasome activation through a microtubule-dependent mechanism.</title>
        <authorList>
            <person name="Li X."/>
            <person name="Thome S."/>
            <person name="Ma X."/>
            <person name="Amrute-Nayak M."/>
            <person name="Finigan A."/>
            <person name="Kitt L."/>
            <person name="Masters L."/>
            <person name="James J.R."/>
            <person name="Shi Y."/>
            <person name="Meng G."/>
            <person name="Mallat Z."/>
        </authorList>
    </citation>
    <scope>FUNCTION</scope>
    <scope>SUBCELLULAR LOCATION</scope>
    <scope>INTERACTION WITH NLRP3</scope>
</reference>
<gene>
    <name evidence="14 16" type="primary">Mark4</name>
    <name evidence="12" type="synonym">Kiaa1860</name>
</gene>
<name>MARK4_MOUSE</name>
<organism>
    <name type="scientific">Mus musculus</name>
    <name type="common">Mouse</name>
    <dbReference type="NCBI Taxonomy" id="10090"/>
    <lineage>
        <taxon>Eukaryota</taxon>
        <taxon>Metazoa</taxon>
        <taxon>Chordata</taxon>
        <taxon>Craniata</taxon>
        <taxon>Vertebrata</taxon>
        <taxon>Euteleostomi</taxon>
        <taxon>Mammalia</taxon>
        <taxon>Eutheria</taxon>
        <taxon>Euarchontoglires</taxon>
        <taxon>Glires</taxon>
        <taxon>Rodentia</taxon>
        <taxon>Myomorpha</taxon>
        <taxon>Muroidea</taxon>
        <taxon>Muridae</taxon>
        <taxon>Murinae</taxon>
        <taxon>Mus</taxon>
        <taxon>Mus</taxon>
    </lineage>
</organism>
<sequence length="752" mass="82644">MSSRTALAPGNDRNSDTHGTLGSGRSSDKGPSWSSRSLGARCRNSIASCPEEQPHVGNYRLLRTIGKGNFAKVKLARHILTGREVAIKIIDKTQLNPSSLQKLFREVRIMKGLNHPNIVKLFEVIETEKTLYLVMEYASAGEVFDYLVSHGRMKEKEARAKFRQIVSAVHYCHQKNIVHRDLKAENLLLDAEANIKIADFGFSNEFTLGSKLDTFCGSPPYAAPELFQGKKYDGPEVDIWSLGVILYTLVSGSLPFDGHNLKELRERVLRGKYRVPFYMSTDCESILRRFLVLNPAKRCTLEQIMKDKWINIGYEGEELKPYTEPEEDFGDTKRIEVMVGMGYTREEIKEALTNQKYNEVTATYLLLGRKTEEGGDRGAPGLALARVRAPSDTTNGTSSSKGSSHNKGQRASSSTYHRQRRHSDFCGPSPAPLHPKRSPTSTGDTELKEERMPGRKASCSAVGSGSRGLPPSSPMVSSAHNPNKAEIPERRKDSTSTPNNLPPSMMTRRNTYVCTERPGSERPSLLPNGKENSSGTSRVPPASPSSHSLAPPSGERSRLARGSTIRSTFHGGQVRDRRAGSGSGGGVQNGPPASPTLAHEAAPLPSGRPRPTTNLFTKLTSKLTRRVTDEPERIGGPEVTSCHLPWDKTETAPRLLRFPWSVKLTSSRPPEALMAALRQATAAARCRCRQPQPFLLACLHGGAGGPEPLSHFEVEVCQLPRPGLRGVLFRRVAGTALAFRTLVTRISNDLEL</sequence>